<proteinExistence type="inferred from homology"/>
<sequence>MGSLSLWHWIIVGAVLLLLFGGKGKVSDIMGDVAKGIKSFKKGLSEDDEKPEAARPAEPARSLDHQPVAEQPKVSETHRIG</sequence>
<feature type="chain" id="PRO_1000125195" description="Sec-independent protein translocase protein TatA">
    <location>
        <begin position="1"/>
        <end position="81"/>
    </location>
</feature>
<feature type="transmembrane region" description="Helical" evidence="1">
    <location>
        <begin position="1"/>
        <end position="21"/>
    </location>
</feature>
<feature type="region of interest" description="Disordered" evidence="2">
    <location>
        <begin position="41"/>
        <end position="81"/>
    </location>
</feature>
<gene>
    <name evidence="1" type="primary">tatA</name>
    <name type="ordered locus">Bind_2705</name>
</gene>
<dbReference type="EMBL" id="CP001016">
    <property type="protein sequence ID" value="ACB96277.1"/>
    <property type="molecule type" value="Genomic_DNA"/>
</dbReference>
<dbReference type="RefSeq" id="WP_012385628.1">
    <property type="nucleotide sequence ID" value="NC_010581.1"/>
</dbReference>
<dbReference type="SMR" id="B2IJG4"/>
<dbReference type="STRING" id="395963.Bind_2705"/>
<dbReference type="KEGG" id="bid:Bind_2705"/>
<dbReference type="eggNOG" id="COG1826">
    <property type="taxonomic scope" value="Bacteria"/>
</dbReference>
<dbReference type="HOGENOM" id="CLU_086034_5_0_5"/>
<dbReference type="Proteomes" id="UP000001695">
    <property type="component" value="Chromosome"/>
</dbReference>
<dbReference type="GO" id="GO:0033281">
    <property type="term" value="C:TAT protein transport complex"/>
    <property type="evidence" value="ECO:0007669"/>
    <property type="project" value="UniProtKB-UniRule"/>
</dbReference>
<dbReference type="GO" id="GO:0008320">
    <property type="term" value="F:protein transmembrane transporter activity"/>
    <property type="evidence" value="ECO:0007669"/>
    <property type="project" value="UniProtKB-UniRule"/>
</dbReference>
<dbReference type="GO" id="GO:0043953">
    <property type="term" value="P:protein transport by the Tat complex"/>
    <property type="evidence" value="ECO:0007669"/>
    <property type="project" value="UniProtKB-UniRule"/>
</dbReference>
<dbReference type="Gene3D" id="1.20.5.3310">
    <property type="match status" value="1"/>
</dbReference>
<dbReference type="HAMAP" id="MF_00236">
    <property type="entry name" value="TatA_E"/>
    <property type="match status" value="1"/>
</dbReference>
<dbReference type="InterPro" id="IPR003369">
    <property type="entry name" value="TatA/B/E"/>
</dbReference>
<dbReference type="InterPro" id="IPR006312">
    <property type="entry name" value="TatA/E"/>
</dbReference>
<dbReference type="NCBIfam" id="NF001940">
    <property type="entry name" value="PRK00720.1"/>
    <property type="match status" value="1"/>
</dbReference>
<dbReference type="NCBIfam" id="TIGR01411">
    <property type="entry name" value="tatAE"/>
    <property type="match status" value="1"/>
</dbReference>
<dbReference type="PANTHER" id="PTHR42982">
    <property type="entry name" value="SEC-INDEPENDENT PROTEIN TRANSLOCASE PROTEIN TATA"/>
    <property type="match status" value="1"/>
</dbReference>
<dbReference type="PANTHER" id="PTHR42982:SF1">
    <property type="entry name" value="SEC-INDEPENDENT PROTEIN TRANSLOCASE PROTEIN TATA"/>
    <property type="match status" value="1"/>
</dbReference>
<dbReference type="Pfam" id="PF02416">
    <property type="entry name" value="TatA_B_E"/>
    <property type="match status" value="1"/>
</dbReference>
<protein>
    <recommendedName>
        <fullName evidence="1">Sec-independent protein translocase protein TatA</fullName>
    </recommendedName>
</protein>
<evidence type="ECO:0000255" key="1">
    <source>
        <dbReference type="HAMAP-Rule" id="MF_00236"/>
    </source>
</evidence>
<evidence type="ECO:0000256" key="2">
    <source>
        <dbReference type="SAM" id="MobiDB-lite"/>
    </source>
</evidence>
<organism>
    <name type="scientific">Beijerinckia indica subsp. indica (strain ATCC 9039 / DSM 1715 / NCIMB 8712)</name>
    <dbReference type="NCBI Taxonomy" id="395963"/>
    <lineage>
        <taxon>Bacteria</taxon>
        <taxon>Pseudomonadati</taxon>
        <taxon>Pseudomonadota</taxon>
        <taxon>Alphaproteobacteria</taxon>
        <taxon>Hyphomicrobiales</taxon>
        <taxon>Beijerinckiaceae</taxon>
        <taxon>Beijerinckia</taxon>
    </lineage>
</organism>
<keyword id="KW-0997">Cell inner membrane</keyword>
<keyword id="KW-1003">Cell membrane</keyword>
<keyword id="KW-0472">Membrane</keyword>
<keyword id="KW-0653">Protein transport</keyword>
<keyword id="KW-1185">Reference proteome</keyword>
<keyword id="KW-0811">Translocation</keyword>
<keyword id="KW-0812">Transmembrane</keyword>
<keyword id="KW-1133">Transmembrane helix</keyword>
<keyword id="KW-0813">Transport</keyword>
<reference key="1">
    <citation type="journal article" date="2010" name="J. Bacteriol.">
        <title>Complete genome sequence of Beijerinckia indica subsp. indica.</title>
        <authorList>
            <person name="Tamas I."/>
            <person name="Dedysh S.N."/>
            <person name="Liesack W."/>
            <person name="Stott M.B."/>
            <person name="Alam M."/>
            <person name="Murrell J.C."/>
            <person name="Dunfield P.F."/>
        </authorList>
    </citation>
    <scope>NUCLEOTIDE SEQUENCE [LARGE SCALE GENOMIC DNA]</scope>
    <source>
        <strain>ATCC 9039 / DSM 1715 / NCIMB 8712</strain>
    </source>
</reference>
<name>TATA_BEII9</name>
<comment type="function">
    <text evidence="1">Part of the twin-arginine translocation (Tat) system that transports large folded proteins containing a characteristic twin-arginine motif in their signal peptide across membranes. TatA could form the protein-conducting channel of the Tat system.</text>
</comment>
<comment type="subunit">
    <text evidence="1">The Tat system comprises two distinct complexes: a TatABC complex, containing multiple copies of TatA, TatB and TatC subunits, and a separate TatA complex, containing only TatA subunits. Substrates initially bind to the TatABC complex, which probably triggers association of the separate TatA complex to form the active translocon.</text>
</comment>
<comment type="subcellular location">
    <subcellularLocation>
        <location evidence="1">Cell inner membrane</location>
        <topology evidence="1">Single-pass membrane protein</topology>
    </subcellularLocation>
</comment>
<comment type="similarity">
    <text evidence="1">Belongs to the TatA/E family.</text>
</comment>
<accession>B2IJG4</accession>